<proteinExistence type="evidence at transcript level"/>
<accession>P69769</accession>
<organism>
    <name type="scientific">Conus radiatus</name>
    <name type="common">Rayed cone</name>
    <dbReference type="NCBI Taxonomy" id="61198"/>
    <lineage>
        <taxon>Eukaryota</taxon>
        <taxon>Metazoa</taxon>
        <taxon>Spiralia</taxon>
        <taxon>Lophotrochozoa</taxon>
        <taxon>Mollusca</taxon>
        <taxon>Gastropoda</taxon>
        <taxon>Caenogastropoda</taxon>
        <taxon>Neogastropoda</taxon>
        <taxon>Conoidea</taxon>
        <taxon>Conidae</taxon>
        <taxon>Conus</taxon>
        <taxon>Phasmoconus</taxon>
    </lineage>
</organism>
<evidence type="ECO:0000250" key="1"/>
<evidence type="ECO:0000250" key="2">
    <source>
        <dbReference type="UniProtKB" id="P01523"/>
    </source>
</evidence>
<evidence type="ECO:0000255" key="3"/>
<evidence type="ECO:0000269" key="4">
    <source>
    </source>
</evidence>
<evidence type="ECO:0000269" key="5">
    <source>
    </source>
</evidence>
<evidence type="ECO:0000305" key="6"/>
<evidence type="ECO:0000305" key="7">
    <source>
    </source>
</evidence>
<comment type="function">
    <text evidence="4 5">Kappa-conotoxins inhibits voltage-gated potassium channels (Kv). This synthetic toxin reversibly inhibits the insect potassium channel Shaker K+, the teleost homolog TSha1 and the mammalian Kv1.2/KCNA2 channel. Interacts with the pore region of the insect channel, in a state-dependent manner. Causes seizure when intracerebrovascularly injected into mice. Is also toxic when intrathecally injected into mice, but shows no visible effects by intraperitoneal injection. Shows protective effects on cardiac tissue when administered after an ischemic event.</text>
</comment>
<comment type="subcellular location">
    <subcellularLocation>
        <location evidence="1">Secreted</location>
    </subcellularLocation>
</comment>
<comment type="tissue specificity">
    <text>Expressed by the venom duct.</text>
</comment>
<comment type="domain">
    <text>The cysteine framework is III (CC-C-C-CC). Classified in the M-4 branch, since 4 residues stand between the fourth and the fifth cysteine residues.</text>
</comment>
<comment type="miscellaneous">
    <text evidence="7">Negative results: has no or very low potency on Kv1.1/KCNA1, Kv1.3/KCNA3, Kv1.4/KCNA4, Kv1.5/KCNA5, Kv1.6/KCNA6, Kv2.1/KCNB1, Kv3.4/KCNC4, Kv4.2/KCND2, Kv7.2/KCNQ2-Kv7.3/KCNQ3, Kv10.1/KCNH1, Kv11.1/KCNH2, and KCa1.1/KCNMA1. Has no effect on sodium channels (Nav1.2/SCN2A, Nav1.4/SCN4A, and Nav1.5/SCN5A) (PubMed:12399472).</text>
</comment>
<comment type="similarity">
    <text evidence="6">Belongs to the conotoxin M superfamily.</text>
</comment>
<sequence>MSKLGVLLTICLLLFPLTALPMDGDQPVDRLAERMQDNISSEQHTFFEKRLPSCCSLNLRLCPVPACKRNPCCTG</sequence>
<protein>
    <recommendedName>
        <fullName>Kappa-conotoxin RIIIK</fullName>
        <shortName>Kappa-M-RIIIK</shortName>
    </recommendedName>
    <alternativeName>
        <fullName>Conotoxin R3.1</fullName>
    </alternativeName>
</protein>
<reference key="1">
    <citation type="journal article" date="2005" name="Biochemistry">
        <title>Definition of the M-conotoxin superfamily: characterization of novel peptides from molluscivorous Conus venoms.</title>
        <authorList>
            <person name="Corpuz G.P."/>
            <person name="Jacobsen R.B."/>
            <person name="Jimenez E.C."/>
            <person name="Watkins M."/>
            <person name="Walker C."/>
            <person name="Colledge C."/>
            <person name="Garrett J.E."/>
            <person name="McDougal O."/>
            <person name="Li W."/>
            <person name="Gray W.R."/>
            <person name="Hillyard D.R."/>
            <person name="Rivier J."/>
            <person name="McIntosh J.M."/>
            <person name="Cruz L.J."/>
            <person name="Olivera B.M."/>
        </authorList>
    </citation>
    <scope>NUCLEOTIDE SEQUENCE [MRNA]</scope>
    <source>
        <tissue>Venom duct</tissue>
    </source>
</reference>
<reference key="2">
    <citation type="journal article" date="2003" name="J. Biol. Chem.">
        <title>A novel conus peptide ligand for K+ channels.</title>
        <authorList>
            <person name="Ferber M."/>
            <person name="Sporning A."/>
            <person name="Jeserich G."/>
            <person name="DeLaCruz R."/>
            <person name="Watkins M."/>
            <person name="Olivera B.M."/>
            <person name="Terlau H."/>
        </authorList>
    </citation>
    <scope>NUCLEOTIDE SEQUENCE [MRNA] OF 48-75</scope>
    <scope>SYNTHESIS OF 51-74</scope>
    <scope>FUNCTION</scope>
    <scope>TOXIN TARGET</scope>
    <source>
        <tissue>Venom duct</tissue>
    </source>
</reference>
<reference key="3">
    <citation type="journal article" date="2010" name="J. Biol. Chem.">
        <title>Biochemical characterization of kappaM-RIIIJ, a Kv1.2 channel blocker: evaluation of cardioprotective effects of kappaM-conotoxins.</title>
        <authorList>
            <person name="Chen P."/>
            <person name="Dendorfer A."/>
            <person name="Finol-Urdaneta R.K."/>
            <person name="Terlau H."/>
            <person name="Olivera B.M."/>
        </authorList>
    </citation>
    <scope>FUNCTION</scope>
    <scope>TOXIN TARGET</scope>
    <scope>ASSAY ON RAT ISCHEMIA/REPERFUSION MODEL</scope>
    <scope>MUTAGENESIS OF LEU-59</scope>
    <source>
        <tissue>Venom</tissue>
    </source>
</reference>
<feature type="signal peptide" evidence="3">
    <location>
        <begin position="1"/>
        <end position="19"/>
    </location>
</feature>
<feature type="propeptide" id="PRO_0000035051" evidence="1">
    <location>
        <begin position="20"/>
        <end position="50"/>
    </location>
</feature>
<feature type="peptide" id="PRO_0000035052" description="Kappa-conotoxin RIIIK">
    <location>
        <begin position="51"/>
        <end position="74"/>
    </location>
</feature>
<feature type="modified residue" description="4-hydroxyproline" evidence="1">
    <location>
        <position position="52"/>
    </location>
</feature>
<feature type="modified residue" description="4-hydroxyproline" evidence="1">
    <location>
        <position position="63"/>
    </location>
</feature>
<feature type="modified residue" description="4-hydroxyproline" evidence="1">
    <location>
        <position position="65"/>
    </location>
</feature>
<feature type="modified residue" description="4-hydroxyproline" evidence="1">
    <location>
        <position position="71"/>
    </location>
</feature>
<feature type="modified residue" description="Threonine amide" evidence="1">
    <location>
        <position position="74"/>
    </location>
</feature>
<feature type="disulfide bond" evidence="2">
    <location>
        <begin position="54"/>
        <end position="67"/>
    </location>
</feature>
<feature type="disulfide bond" evidence="2">
    <location>
        <begin position="55"/>
        <end position="72"/>
    </location>
</feature>
<feature type="disulfide bond" evidence="2">
    <location>
        <begin position="62"/>
        <end position="73"/>
    </location>
</feature>
<feature type="mutagenesis site" description="3.5-fold increase of potency for Kv1.2/KCNA2." evidence="5">
    <original>L</original>
    <variation>K</variation>
    <location>
        <position position="59"/>
    </location>
</feature>
<dbReference type="PDB" id="9KK3">
    <property type="method" value="NMR"/>
    <property type="chains" value="A=51-74"/>
</dbReference>
<dbReference type="PDBsum" id="9KK3"/>
<dbReference type="SMR" id="P69769"/>
<dbReference type="ConoServer" id="1521">
    <property type="toxin name" value="RIIIK precursor"/>
</dbReference>
<dbReference type="GO" id="GO:0005576">
    <property type="term" value="C:extracellular region"/>
    <property type="evidence" value="ECO:0007669"/>
    <property type="project" value="UniProtKB-SubCell"/>
</dbReference>
<dbReference type="GO" id="GO:0008200">
    <property type="term" value="F:ion channel inhibitor activity"/>
    <property type="evidence" value="ECO:0007669"/>
    <property type="project" value="InterPro"/>
</dbReference>
<dbReference type="GO" id="GO:0015459">
    <property type="term" value="F:potassium channel regulator activity"/>
    <property type="evidence" value="ECO:0007669"/>
    <property type="project" value="UniProtKB-KW"/>
</dbReference>
<dbReference type="GO" id="GO:0090729">
    <property type="term" value="F:toxin activity"/>
    <property type="evidence" value="ECO:0007669"/>
    <property type="project" value="UniProtKB-KW"/>
</dbReference>
<dbReference type="InterPro" id="IPR004214">
    <property type="entry name" value="Conotoxin"/>
</dbReference>
<dbReference type="Pfam" id="PF02950">
    <property type="entry name" value="Conotoxin"/>
    <property type="match status" value="1"/>
</dbReference>
<keyword id="KW-0002">3D-structure</keyword>
<keyword id="KW-0027">Amidation</keyword>
<keyword id="KW-0165">Cleavage on pair of basic residues</keyword>
<keyword id="KW-1015">Disulfide bond</keyword>
<keyword id="KW-0379">Hydroxylation</keyword>
<keyword id="KW-0872">Ion channel impairing toxin</keyword>
<keyword id="KW-0528">Neurotoxin</keyword>
<keyword id="KW-0632">Potassium channel impairing toxin</keyword>
<keyword id="KW-0964">Secreted</keyword>
<keyword id="KW-0732">Signal</keyword>
<keyword id="KW-0800">Toxin</keyword>
<keyword id="KW-1220">Voltage-gated potassium channel impairing toxin</keyword>
<name>CM3K_CONRA</name>